<sequence length="499" mass="56620">MHLKFHTLSLNDSGPLLAESSVKPSQQQICDDILLLWREEPITDGLSVDLLYDKVMGRHPEWILDRTEFKNAVRNQHLDSNDERSLKVYNDFIDIPSFNDDYDAIIDKKTSSNVCVKNCKDGHKGRGLYALKDFVKDDLIFKESYPIVVVPSMERLTLMKMGKACSLCGGLLSHLSKHFIVVHSLDCDNCGGVWCSNECKNIDIGHNTLKHLHKSKINGIDSVAWGKFEKYCNDNVFVAAYSIGVIMALALIDKKNTDKIRKKFNLLSSVSQGIRINESDSTNIGGTFDASSGAMSNKDPEPIWKTSYELLKNAIPTTDELDMETYLSYIGRYNINQISDQMFFLPSLINHNCEPNVRFEVVSNKEIRVYARKNISAGQELLTNYINPLHGVKLRRRELRVNYGFLCHCDRCIKEIKRNNDVENENLSNSINNNGGLSVPNDSLLTRRKSSMRTARPDLSELLKTGQEFDLDIPENLSGKKNRRTSVRFVNQVTLAVEE</sequence>
<name>SET5_VANPO</name>
<comment type="function">
    <text evidence="1">Histone methyltransferase that monomethylates 'Lys-5', 'Lys-8' and 'Lys-12' of histone H4 (H4K5me1, H4K8me1 and H4K12me1, respectively), thereby controlling gene expression and remodeling chromatin structures.</text>
</comment>
<comment type="catalytic activity">
    <reaction evidence="1">
        <text>L-lysyl-[histone] + S-adenosyl-L-methionine = N(6)-methyl-L-lysyl-[histone] + S-adenosyl-L-homocysteine + H(+)</text>
        <dbReference type="Rhea" id="RHEA:10024"/>
        <dbReference type="Rhea" id="RHEA-COMP:9845"/>
        <dbReference type="Rhea" id="RHEA-COMP:9846"/>
        <dbReference type="ChEBI" id="CHEBI:15378"/>
        <dbReference type="ChEBI" id="CHEBI:29969"/>
        <dbReference type="ChEBI" id="CHEBI:57856"/>
        <dbReference type="ChEBI" id="CHEBI:59789"/>
        <dbReference type="ChEBI" id="CHEBI:61929"/>
    </reaction>
    <physiologicalReaction direction="left-to-right" evidence="1">
        <dbReference type="Rhea" id="RHEA:10025"/>
    </physiologicalReaction>
</comment>
<comment type="subcellular location">
    <subcellularLocation>
        <location evidence="1">Nucleus</location>
    </subcellularLocation>
    <subcellularLocation>
        <location evidence="1">Chromosome</location>
    </subcellularLocation>
    <subcellularLocation>
        <location evidence="1">Cytoplasm</location>
    </subcellularLocation>
</comment>
<comment type="similarity">
    <text evidence="2">Belongs to the class V-like SAM-binding methyltransferase superfamily. Histone-lysine methyltransferase family. SET5 subfamily.</text>
</comment>
<evidence type="ECO:0000250" key="1">
    <source>
        <dbReference type="UniProtKB" id="P38890"/>
    </source>
</evidence>
<evidence type="ECO:0000255" key="2">
    <source>
        <dbReference type="PROSITE-ProRule" id="PRU00190"/>
    </source>
</evidence>
<dbReference type="EC" id="2.1.1.-" evidence="1"/>
<dbReference type="EMBL" id="DS480448">
    <property type="protein sequence ID" value="EDO15701.1"/>
    <property type="molecule type" value="Genomic_DNA"/>
</dbReference>
<dbReference type="RefSeq" id="XP_001643559.1">
    <property type="nucleotide sequence ID" value="XM_001643509.1"/>
</dbReference>
<dbReference type="SMR" id="A7TPV3"/>
<dbReference type="FunCoup" id="A7TPV3">
    <property type="interactions" value="692"/>
</dbReference>
<dbReference type="STRING" id="436907.A7TPV3"/>
<dbReference type="GeneID" id="5543809"/>
<dbReference type="KEGG" id="vpo:Kpol_1000p13"/>
<dbReference type="eggNOG" id="KOG2084">
    <property type="taxonomic scope" value="Eukaryota"/>
</dbReference>
<dbReference type="HOGENOM" id="CLU_031650_0_0_1"/>
<dbReference type="InParanoid" id="A7TPV3"/>
<dbReference type="OMA" id="CEPNVRY"/>
<dbReference type="OrthoDB" id="438641at2759"/>
<dbReference type="PhylomeDB" id="A7TPV3"/>
<dbReference type="Proteomes" id="UP000000267">
    <property type="component" value="Unassembled WGS sequence"/>
</dbReference>
<dbReference type="GO" id="GO:0000785">
    <property type="term" value="C:chromatin"/>
    <property type="evidence" value="ECO:0007669"/>
    <property type="project" value="EnsemblFungi"/>
</dbReference>
<dbReference type="GO" id="GO:0005737">
    <property type="term" value="C:cytoplasm"/>
    <property type="evidence" value="ECO:0007669"/>
    <property type="project" value="UniProtKB-SubCell"/>
</dbReference>
<dbReference type="GO" id="GO:0005634">
    <property type="term" value="C:nucleus"/>
    <property type="evidence" value="ECO:0007669"/>
    <property type="project" value="UniProtKB-SubCell"/>
</dbReference>
<dbReference type="GO" id="GO:0042799">
    <property type="term" value="F:histone H4K20 methyltransferase activity"/>
    <property type="evidence" value="ECO:0007669"/>
    <property type="project" value="TreeGrafter"/>
</dbReference>
<dbReference type="GO" id="GO:0032259">
    <property type="term" value="P:methylation"/>
    <property type="evidence" value="ECO:0007669"/>
    <property type="project" value="UniProtKB-KW"/>
</dbReference>
<dbReference type="GO" id="GO:0045814">
    <property type="term" value="P:negative regulation of gene expression, epigenetic"/>
    <property type="evidence" value="ECO:0007669"/>
    <property type="project" value="TreeGrafter"/>
</dbReference>
<dbReference type="GO" id="GO:0000723">
    <property type="term" value="P:telomere maintenance"/>
    <property type="evidence" value="ECO:0007669"/>
    <property type="project" value="EnsemblFungi"/>
</dbReference>
<dbReference type="CDD" id="cd20071">
    <property type="entry name" value="SET_SMYD"/>
    <property type="match status" value="1"/>
</dbReference>
<dbReference type="Gene3D" id="1.10.220.160">
    <property type="match status" value="1"/>
</dbReference>
<dbReference type="Gene3D" id="6.10.140.2220">
    <property type="match status" value="1"/>
</dbReference>
<dbReference type="Gene3D" id="2.170.270.10">
    <property type="entry name" value="SET domain"/>
    <property type="match status" value="1"/>
</dbReference>
<dbReference type="InterPro" id="IPR001214">
    <property type="entry name" value="SET_dom"/>
</dbReference>
<dbReference type="InterPro" id="IPR046341">
    <property type="entry name" value="SET_dom_sf"/>
</dbReference>
<dbReference type="PANTHER" id="PTHR46402:SF2">
    <property type="entry name" value="HISTONE-LYSINE N-TRIMETHYLTRANSFERASE SMYD5"/>
    <property type="match status" value="1"/>
</dbReference>
<dbReference type="PANTHER" id="PTHR46402">
    <property type="entry name" value="SET AND MYND DOMAIN-CONTAINING PROTEIN 5"/>
    <property type="match status" value="1"/>
</dbReference>
<dbReference type="Pfam" id="PF00856">
    <property type="entry name" value="SET"/>
    <property type="match status" value="1"/>
</dbReference>
<dbReference type="SMART" id="SM00317">
    <property type="entry name" value="SET"/>
    <property type="match status" value="1"/>
</dbReference>
<dbReference type="SUPFAM" id="SSF82199">
    <property type="entry name" value="SET domain"/>
    <property type="match status" value="1"/>
</dbReference>
<dbReference type="PROSITE" id="PS50280">
    <property type="entry name" value="SET"/>
    <property type="match status" value="1"/>
</dbReference>
<feature type="chain" id="PRO_0000324473" description="Histone-lysine N-methyltransferase SET5">
    <location>
        <begin position="1"/>
        <end position="499"/>
    </location>
</feature>
<feature type="domain" description="SET" evidence="2">
    <location>
        <begin position="112"/>
        <end position="386"/>
    </location>
</feature>
<organism>
    <name type="scientific">Vanderwaltozyma polyspora (strain ATCC 22028 / DSM 70294 / BCRC 21397 / CBS 2163 / NBRC 10782 / NRRL Y-8283 / UCD 57-17)</name>
    <name type="common">Kluyveromyces polysporus</name>
    <dbReference type="NCBI Taxonomy" id="436907"/>
    <lineage>
        <taxon>Eukaryota</taxon>
        <taxon>Fungi</taxon>
        <taxon>Dikarya</taxon>
        <taxon>Ascomycota</taxon>
        <taxon>Saccharomycotina</taxon>
        <taxon>Saccharomycetes</taxon>
        <taxon>Saccharomycetales</taxon>
        <taxon>Saccharomycetaceae</taxon>
        <taxon>Vanderwaltozyma</taxon>
    </lineage>
</organism>
<reference key="1">
    <citation type="journal article" date="2007" name="Proc. Natl. Acad. Sci. U.S.A.">
        <title>Independent sorting-out of thousands of duplicated gene pairs in two yeast species descended from a whole-genome duplication.</title>
        <authorList>
            <person name="Scannell D.R."/>
            <person name="Frank A.C."/>
            <person name="Conant G.C."/>
            <person name="Byrne K.P."/>
            <person name="Woolfit M."/>
            <person name="Wolfe K.H."/>
        </authorList>
    </citation>
    <scope>NUCLEOTIDE SEQUENCE [LARGE SCALE GENOMIC DNA]</scope>
    <source>
        <strain>ATCC 22028 / DSM 70294 / BCRC 21397 / CBS 2163 / NBRC 10782 / NRRL Y-8283 / UCD 57-17</strain>
    </source>
</reference>
<gene>
    <name type="primary">SET5</name>
    <name type="ORF">Kpol_1000p13</name>
</gene>
<proteinExistence type="inferred from homology"/>
<keyword id="KW-0158">Chromosome</keyword>
<keyword id="KW-0963">Cytoplasm</keyword>
<keyword id="KW-0489">Methyltransferase</keyword>
<keyword id="KW-0539">Nucleus</keyword>
<keyword id="KW-1185">Reference proteome</keyword>
<keyword id="KW-0949">S-adenosyl-L-methionine</keyword>
<keyword id="KW-0808">Transferase</keyword>
<accession>A7TPV3</accession>
<protein>
    <recommendedName>
        <fullName>Histone-lysine N-methyltransferase SET5</fullName>
        <ecNumber evidence="1">2.1.1.-</ecNumber>
    </recommendedName>
    <alternativeName>
        <fullName>SET domain-containing protein 5</fullName>
    </alternativeName>
</protein>